<comment type="catalytic activity">
    <reaction>
        <text>L-glutamate + NADP(+) + H2O = 2-oxoglutarate + NH4(+) + NADPH + H(+)</text>
        <dbReference type="Rhea" id="RHEA:11612"/>
        <dbReference type="ChEBI" id="CHEBI:15377"/>
        <dbReference type="ChEBI" id="CHEBI:15378"/>
        <dbReference type="ChEBI" id="CHEBI:16810"/>
        <dbReference type="ChEBI" id="CHEBI:28938"/>
        <dbReference type="ChEBI" id="CHEBI:29985"/>
        <dbReference type="ChEBI" id="CHEBI:57783"/>
        <dbReference type="ChEBI" id="CHEBI:58349"/>
        <dbReference type="EC" id="1.4.1.4"/>
    </reaction>
</comment>
<comment type="subunit">
    <text>Homo- and heterohexamer of alpha and beta subunits. Both subunits are encoded by the same gene.</text>
</comment>
<comment type="subcellular location">
    <subcellularLocation>
        <location>Plastid</location>
        <location>Chloroplast</location>
    </subcellularLocation>
</comment>
<comment type="induction">
    <text>By ammonium.</text>
</comment>
<comment type="PTM">
    <text>The N-termini of the alpha and the beta chains are blocked.</text>
</comment>
<comment type="similarity">
    <text evidence="3">Belongs to the Glu/Leu/Phe/Val dehydrogenases family.</text>
</comment>
<feature type="chain" id="PRO_0000182782" description="NADP-specific glutamate dehydrogenase">
    <location>
        <begin position="1" status="less than"/>
        <end position="523"/>
    </location>
</feature>
<feature type="region of interest" description="Disordered" evidence="2">
    <location>
        <begin position="26"/>
        <end position="50"/>
    </location>
</feature>
<feature type="active site" evidence="1">
    <location>
        <position position="202"/>
    </location>
</feature>
<feature type="sequence conflict" description="In Ref. 1; CAA41635." evidence="3" ref="1">
    <original>FC</original>
    <variation>LW</variation>
    <location>
        <begin position="220"/>
        <end position="221"/>
    </location>
</feature>
<feature type="non-terminal residue">
    <location>
        <position position="1"/>
    </location>
</feature>
<organism>
    <name type="scientific">Chlorella sorokiniana</name>
    <name type="common">Freshwater green alga</name>
    <dbReference type="NCBI Taxonomy" id="3076"/>
    <lineage>
        <taxon>Eukaryota</taxon>
        <taxon>Viridiplantae</taxon>
        <taxon>Chlorophyta</taxon>
        <taxon>core chlorophytes</taxon>
        <taxon>Trebouxiophyceae</taxon>
        <taxon>Chlorellales</taxon>
        <taxon>Chlorellaceae</taxon>
        <taxon>Chlorella clade</taxon>
        <taxon>Chlorella</taxon>
    </lineage>
</organism>
<name>DHE4_CHLSO</name>
<reference key="1">
    <citation type="journal article" date="1991" name="Plant Mol. Biol.">
        <title>A nuclear gene with many introns encoding ammonium-inducible chloroplastic NADP-specific glutamate dehydrogenase(s) in Chlorella sorokiniana.</title>
        <authorList>
            <person name="Cock J.M."/>
            <person name="Kim K.D."/>
            <person name="Miller P.W."/>
            <person name="Hutson R.G."/>
            <person name="Schmidt R.R."/>
        </authorList>
    </citation>
    <scope>NUCLEOTIDE SEQUENCE [GENOMIC DNA / MRNA]</scope>
</reference>
<evidence type="ECO:0000255" key="1">
    <source>
        <dbReference type="PROSITE-ProRule" id="PRU10011"/>
    </source>
</evidence>
<evidence type="ECO:0000256" key="2">
    <source>
        <dbReference type="SAM" id="MobiDB-lite"/>
    </source>
</evidence>
<evidence type="ECO:0000305" key="3"/>
<keyword id="KW-0150">Chloroplast</keyword>
<keyword id="KW-0521">NADP</keyword>
<keyword id="KW-0560">Oxidoreductase</keyword>
<keyword id="KW-0934">Plastid</keyword>
<sequence length="523" mass="57530">CRPPSSPSLSWPPGLRSPALPRAVACARGRSAKRDVAAKRLRSRSPRMDATTGDFTALQKAVKQMATKAGTEGLVHGIKNPELRQLLTEIFMKDPEQQEFMQAVREVAVSLQPVFEKRPELLPIFKQIVEPERVITFRVSWLDDAGNLQVNRGFRVQYSSAIGPYKGGLRFHPSVNLSIMKFLAFEQIFKNSLTTLPMGGGKGGSDFDPKGKSDAEVMRFCQSFMTELQRHISYVQDVPAGDIGVGAREIGYLFGQYKRITKNYTGVLTGKGQEYGGSEIRPEATGYGAVLFVENVLKDKGESLKGKRCLVSGAGNVAQYCAELLLEKGAIVLSLSDSQGYVYEPNGFTREQLQAVQDMKKKNNSARISEYKSDTAVYVGDRRKPWELDCQVDIAFPCATQNEIDEHDAELLIKHGCQYVVEGANMPSTNEAIHKYNKAGIIYCPGKAANAGGVAVSGLEMTQNRMSLNWTREEVRDKLERIMKDIYDSAMGPSREYNVDLAAGANIAGFTKVADAVKAQGAV</sequence>
<proteinExistence type="evidence at transcript level"/>
<accession>P28998</accession>
<protein>
    <recommendedName>
        <fullName>NADP-specific glutamate dehydrogenase</fullName>
        <shortName>NADP-GDH</shortName>
        <ecNumber>1.4.1.4</ecNumber>
    </recommendedName>
</protein>
<dbReference type="EC" id="1.4.1.4"/>
<dbReference type="EMBL" id="X58832">
    <property type="protein sequence ID" value="CAA41636.1"/>
    <property type="molecule type" value="mRNA"/>
</dbReference>
<dbReference type="EMBL" id="X58831">
    <property type="protein sequence ID" value="CAA41635.1"/>
    <property type="molecule type" value="Genomic_DNA"/>
</dbReference>
<dbReference type="PIR" id="S17949">
    <property type="entry name" value="S17949"/>
</dbReference>
<dbReference type="SMR" id="P28998"/>
<dbReference type="BRENDA" id="1.4.1.4">
    <property type="organism ID" value="1334"/>
</dbReference>
<dbReference type="GO" id="GO:0009507">
    <property type="term" value="C:chloroplast"/>
    <property type="evidence" value="ECO:0007669"/>
    <property type="project" value="UniProtKB-SubCell"/>
</dbReference>
<dbReference type="GO" id="GO:0005829">
    <property type="term" value="C:cytosol"/>
    <property type="evidence" value="ECO:0007669"/>
    <property type="project" value="TreeGrafter"/>
</dbReference>
<dbReference type="GO" id="GO:0004354">
    <property type="term" value="F:glutamate dehydrogenase (NADP+) activity"/>
    <property type="evidence" value="ECO:0007669"/>
    <property type="project" value="UniProtKB-EC"/>
</dbReference>
<dbReference type="GO" id="GO:0006537">
    <property type="term" value="P:glutamate biosynthetic process"/>
    <property type="evidence" value="ECO:0007669"/>
    <property type="project" value="TreeGrafter"/>
</dbReference>
<dbReference type="CDD" id="cd05313">
    <property type="entry name" value="NAD_bind_2_Glu_DH"/>
    <property type="match status" value="1"/>
</dbReference>
<dbReference type="FunFam" id="1.10.285.10:FF:000001">
    <property type="entry name" value="Glutamate dehydrogenase"/>
    <property type="match status" value="1"/>
</dbReference>
<dbReference type="FunFam" id="3.40.50.10860:FF:000002">
    <property type="entry name" value="Glutamate dehydrogenase"/>
    <property type="match status" value="1"/>
</dbReference>
<dbReference type="FunFam" id="3.40.50.720:FF:000030">
    <property type="entry name" value="Glutamate dehydrogenase"/>
    <property type="match status" value="1"/>
</dbReference>
<dbReference type="Gene3D" id="1.10.285.10">
    <property type="entry name" value="Glutamate Dehydrogenase, chain A, domain 3"/>
    <property type="match status" value="2"/>
</dbReference>
<dbReference type="Gene3D" id="3.40.50.10860">
    <property type="entry name" value="Leucine Dehydrogenase, chain A, domain 1"/>
    <property type="match status" value="1"/>
</dbReference>
<dbReference type="Gene3D" id="3.40.50.720">
    <property type="entry name" value="NAD(P)-binding Rossmann-like Domain"/>
    <property type="match status" value="1"/>
</dbReference>
<dbReference type="InterPro" id="IPR046346">
    <property type="entry name" value="Aminoacid_DH-like_N_sf"/>
</dbReference>
<dbReference type="InterPro" id="IPR006095">
    <property type="entry name" value="Glu/Leu/Phe/Val/Trp_DH"/>
</dbReference>
<dbReference type="InterPro" id="IPR006096">
    <property type="entry name" value="Glu/Leu/Phe/Val/Trp_DH_C"/>
</dbReference>
<dbReference type="InterPro" id="IPR006097">
    <property type="entry name" value="Glu/Leu/Phe/Val/Trp_DH_dimer"/>
</dbReference>
<dbReference type="InterPro" id="IPR033524">
    <property type="entry name" value="Glu/Leu/Phe/Val_DH_AS"/>
</dbReference>
<dbReference type="InterPro" id="IPR050724">
    <property type="entry name" value="Glu_Leu_Phe_Val_DH"/>
</dbReference>
<dbReference type="InterPro" id="IPR036291">
    <property type="entry name" value="NAD(P)-bd_dom_sf"/>
</dbReference>
<dbReference type="InterPro" id="IPR033922">
    <property type="entry name" value="NAD_bind_Glu_DH"/>
</dbReference>
<dbReference type="NCBIfam" id="NF006929">
    <property type="entry name" value="PRK09414.1"/>
    <property type="match status" value="1"/>
</dbReference>
<dbReference type="PANTHER" id="PTHR43571">
    <property type="entry name" value="NADP-SPECIFIC GLUTAMATE DEHYDROGENASE 1-RELATED"/>
    <property type="match status" value="1"/>
</dbReference>
<dbReference type="PANTHER" id="PTHR43571:SF1">
    <property type="entry name" value="NADP-SPECIFIC GLUTAMATE DEHYDROGENASE 1-RELATED"/>
    <property type="match status" value="1"/>
</dbReference>
<dbReference type="Pfam" id="PF00208">
    <property type="entry name" value="ELFV_dehydrog"/>
    <property type="match status" value="1"/>
</dbReference>
<dbReference type="Pfam" id="PF02812">
    <property type="entry name" value="ELFV_dehydrog_N"/>
    <property type="match status" value="1"/>
</dbReference>
<dbReference type="PRINTS" id="PR00082">
    <property type="entry name" value="GLFDHDRGNASE"/>
</dbReference>
<dbReference type="SMART" id="SM00839">
    <property type="entry name" value="ELFV_dehydrog"/>
    <property type="match status" value="1"/>
</dbReference>
<dbReference type="SUPFAM" id="SSF53223">
    <property type="entry name" value="Aminoacid dehydrogenase-like, N-terminal domain"/>
    <property type="match status" value="1"/>
</dbReference>
<dbReference type="SUPFAM" id="SSF51735">
    <property type="entry name" value="NAD(P)-binding Rossmann-fold domains"/>
    <property type="match status" value="1"/>
</dbReference>
<dbReference type="PROSITE" id="PS00074">
    <property type="entry name" value="GLFV_DEHYDROGENASE"/>
    <property type="match status" value="1"/>
</dbReference>